<keyword id="KW-0002">3D-structure</keyword>
<keyword id="KW-0067">ATP-binding</keyword>
<keyword id="KW-0414">Isoprene biosynthesis</keyword>
<keyword id="KW-0418">Kinase</keyword>
<keyword id="KW-0547">Nucleotide-binding</keyword>
<keyword id="KW-1185">Reference proteome</keyword>
<keyword id="KW-0808">Transferase</keyword>
<dbReference type="EC" id="2.7.4.26"/>
<dbReference type="EMBL" id="L77117">
    <property type="protein sequence ID" value="AAB98024.1"/>
    <property type="molecule type" value="Genomic_DNA"/>
</dbReference>
<dbReference type="PIR" id="D64305">
    <property type="entry name" value="D64305"/>
</dbReference>
<dbReference type="RefSeq" id="WP_010869535.1">
    <property type="nucleotide sequence ID" value="NC_000909.1"/>
</dbReference>
<dbReference type="PDB" id="3K4O">
    <property type="method" value="X-ray"/>
    <property type="resolution" value="2.05 A"/>
    <property type="chains" value="A/B=1-260"/>
</dbReference>
<dbReference type="PDB" id="3K4Y">
    <property type="method" value="X-ray"/>
    <property type="resolution" value="2.54 A"/>
    <property type="chains" value="A/B=1-260"/>
</dbReference>
<dbReference type="PDB" id="3K52">
    <property type="method" value="X-ray"/>
    <property type="resolution" value="2.70 A"/>
    <property type="chains" value="A/B=1-260"/>
</dbReference>
<dbReference type="PDB" id="3K56">
    <property type="method" value="X-ray"/>
    <property type="resolution" value="2.34 A"/>
    <property type="chains" value="A/B=1-260"/>
</dbReference>
<dbReference type="PDBsum" id="3K4O"/>
<dbReference type="PDBsum" id="3K4Y"/>
<dbReference type="PDBsum" id="3K52"/>
<dbReference type="PDBsum" id="3K56"/>
<dbReference type="SMR" id="Q60352"/>
<dbReference type="FunCoup" id="Q60352">
    <property type="interactions" value="40"/>
</dbReference>
<dbReference type="STRING" id="243232.MJ_0044"/>
<dbReference type="PaxDb" id="243232-MJ_0044"/>
<dbReference type="EnsemblBacteria" id="AAB98024">
    <property type="protein sequence ID" value="AAB98024"/>
    <property type="gene ID" value="MJ_0044"/>
</dbReference>
<dbReference type="GeneID" id="1450882"/>
<dbReference type="KEGG" id="mja:MJ_0044"/>
<dbReference type="eggNOG" id="arCOG00860">
    <property type="taxonomic scope" value="Archaea"/>
</dbReference>
<dbReference type="HOGENOM" id="CLU_070213_0_0_2"/>
<dbReference type="InParanoid" id="Q60352"/>
<dbReference type="OrthoDB" id="15328at2157"/>
<dbReference type="PhylomeDB" id="Q60352"/>
<dbReference type="BioCyc" id="MetaCyc:MONOMER-14619"/>
<dbReference type="BRENDA" id="2.7.4.26">
    <property type="organism ID" value="3260"/>
</dbReference>
<dbReference type="EvolutionaryTrace" id="Q60352"/>
<dbReference type="Proteomes" id="UP000000805">
    <property type="component" value="Chromosome"/>
</dbReference>
<dbReference type="GO" id="GO:0005829">
    <property type="term" value="C:cytosol"/>
    <property type="evidence" value="ECO:0000318"/>
    <property type="project" value="GO_Central"/>
</dbReference>
<dbReference type="GO" id="GO:0005524">
    <property type="term" value="F:ATP binding"/>
    <property type="evidence" value="ECO:0007669"/>
    <property type="project" value="UniProtKB-KW"/>
</dbReference>
<dbReference type="GO" id="GO:0102043">
    <property type="term" value="F:isopentenyl phosphate kinase activity"/>
    <property type="evidence" value="ECO:0000318"/>
    <property type="project" value="GO_Central"/>
</dbReference>
<dbReference type="GO" id="GO:0016301">
    <property type="term" value="F:kinase activity"/>
    <property type="evidence" value="ECO:0007669"/>
    <property type="project" value="UniProtKB-KW"/>
</dbReference>
<dbReference type="GO" id="GO:0016114">
    <property type="term" value="P:terpenoid biosynthetic process"/>
    <property type="evidence" value="ECO:0000318"/>
    <property type="project" value="GO_Central"/>
</dbReference>
<dbReference type="CDD" id="cd04241">
    <property type="entry name" value="AAK_FomA-like"/>
    <property type="match status" value="1"/>
</dbReference>
<dbReference type="Gene3D" id="3.40.1160.10">
    <property type="entry name" value="Acetylglutamate kinase-like"/>
    <property type="match status" value="1"/>
</dbReference>
<dbReference type="InterPro" id="IPR036393">
    <property type="entry name" value="AceGlu_kinase-like_sf"/>
</dbReference>
<dbReference type="InterPro" id="IPR001048">
    <property type="entry name" value="Asp/Glu/Uridylate_kinase"/>
</dbReference>
<dbReference type="InterPro" id="IPR024192">
    <property type="entry name" value="Fosfomycin_R_FomA-type"/>
</dbReference>
<dbReference type="InterPro" id="IPR001057">
    <property type="entry name" value="Glu/AcGlu_kinase"/>
</dbReference>
<dbReference type="NCBIfam" id="NF040647">
    <property type="entry name" value="IPPK_Arch"/>
    <property type="match status" value="1"/>
</dbReference>
<dbReference type="PANTHER" id="PTHR43654">
    <property type="entry name" value="GLUTAMATE 5-KINASE"/>
    <property type="match status" value="1"/>
</dbReference>
<dbReference type="PANTHER" id="PTHR43654:SF1">
    <property type="entry name" value="ISOPENTENYL PHOSPHATE KINASE"/>
    <property type="match status" value="1"/>
</dbReference>
<dbReference type="Pfam" id="PF00696">
    <property type="entry name" value="AA_kinase"/>
    <property type="match status" value="1"/>
</dbReference>
<dbReference type="PIRSF" id="PIRSF016496">
    <property type="entry name" value="Kin_FomA"/>
    <property type="match status" value="1"/>
</dbReference>
<dbReference type="PRINTS" id="PR00474">
    <property type="entry name" value="GLU5KINASE"/>
</dbReference>
<dbReference type="SUPFAM" id="SSF53633">
    <property type="entry name" value="Carbamate kinase-like"/>
    <property type="match status" value="1"/>
</dbReference>
<sequence>MLTILKLGGSILSDKNVPYSIKWDNLERIAMEIKNALDYYKNQNKEIKLILVHGGGAFGHPVAKKYLKIEDGKKIFINMEKGFWEIQRAMRRFNNIIIDTLQSYDIPAVSIQPSSFVVFGDKLIFDTSAIKEMLKRNLVPVIHGDIVIDDKNGYRIISGDDIVPYLANELKADLILYATDVDGVLIDNKPIKRIDKNNIYKILNYLSGSNSIDVTGGMKYKIDMIRKNKCRGFVFNGNKANNIYKALLGEVEGTEIDFSE</sequence>
<proteinExistence type="evidence at protein level"/>
<name>IPK_METJA</name>
<reference key="1">
    <citation type="journal article" date="1996" name="Science">
        <title>Complete genome sequence of the methanogenic archaeon, Methanococcus jannaschii.</title>
        <authorList>
            <person name="Bult C.J."/>
            <person name="White O."/>
            <person name="Olsen G.J."/>
            <person name="Zhou L."/>
            <person name="Fleischmann R.D."/>
            <person name="Sutton G.G."/>
            <person name="Blake J.A."/>
            <person name="FitzGerald L.M."/>
            <person name="Clayton R.A."/>
            <person name="Gocayne J.D."/>
            <person name="Kerlavage A.R."/>
            <person name="Dougherty B.A."/>
            <person name="Tomb J.-F."/>
            <person name="Adams M.D."/>
            <person name="Reich C.I."/>
            <person name="Overbeek R."/>
            <person name="Kirkness E.F."/>
            <person name="Weinstock K.G."/>
            <person name="Merrick J.M."/>
            <person name="Glodek A."/>
            <person name="Scott J.L."/>
            <person name="Geoghagen N.S.M."/>
            <person name="Weidman J.F."/>
            <person name="Fuhrmann J.L."/>
            <person name="Nguyen D."/>
            <person name="Utterback T.R."/>
            <person name="Kelley J.M."/>
            <person name="Peterson J.D."/>
            <person name="Sadow P.W."/>
            <person name="Hanna M.C."/>
            <person name="Cotton M.D."/>
            <person name="Roberts K.M."/>
            <person name="Hurst M.A."/>
            <person name="Kaine B.P."/>
            <person name="Borodovsky M."/>
            <person name="Klenk H.-P."/>
            <person name="Fraser C.M."/>
            <person name="Smith H.O."/>
            <person name="Woese C.R."/>
            <person name="Venter J.C."/>
        </authorList>
    </citation>
    <scope>NUCLEOTIDE SEQUENCE [LARGE SCALE GENOMIC DNA]</scope>
    <source>
        <strain>ATCC 43067 / DSM 2661 / JAL-1 / JCM 10045 / NBRC 100440</strain>
    </source>
</reference>
<reference key="2">
    <citation type="journal article" date="2006" name="J. Bacteriol.">
        <title>Methanocaldococcus jannaschii uses a modified mevalonate pathway for biosynthesis of isopentenyl diphosphate.</title>
        <authorList>
            <person name="Grochowski L.L."/>
            <person name="Xu H."/>
            <person name="White R.H."/>
        </authorList>
    </citation>
    <scope>IDENTIFICATION</scope>
    <scope>FUNCTION</scope>
    <scope>BIOPHYSICOCHEMICAL PROPERTIES</scope>
    <scope>CATALYTIC ACTIVITY</scope>
</reference>
<reference key="3">
    <citation type="journal article" date="2010" name="ACS Chem. Biol.">
        <title>Mutation of archaeal isopentenyl phosphate kinase highlights mechanism and guides phosphorylation of additional isoprenoid monophosphates.</title>
        <authorList>
            <person name="Dellas N."/>
            <person name="Noel J.P."/>
        </authorList>
    </citation>
    <scope>X-RAY CRYSTALLOGRAPHY (2.05 ANGSTROMS) IN COMPLEXES WITH ISOPENTENYL PHOSPHATE; ISOPENTENYL DIPHOSPHATE AND SULFATE</scope>
    <scope>CATALYTIC ACTIVITY</scope>
    <scope>FUNCTION</scope>
    <scope>SUBUNIT</scope>
    <scope>BIOPHYSICOCHEMICAL PROPERTIES</scope>
    <scope>MUTAGENESIS OF HIS-60; PHE-83; ILE-86 AND ILE-156</scope>
</reference>
<protein>
    <recommendedName>
        <fullName>Isopentenyl phosphate kinase</fullName>
        <shortName>IPK</shortName>
        <ecNumber>2.7.4.26</ecNumber>
    </recommendedName>
</protein>
<comment type="function">
    <text evidence="2 3">Catalyzes the formation of isopentenyl diphosphate (IPP), the building block of all isoprenoids. Has no activity with farnesyl phosphate.</text>
</comment>
<comment type="catalytic activity">
    <reaction evidence="2 3">
        <text>isopentenyl phosphate + ATP = isopentenyl diphosphate + ADP</text>
        <dbReference type="Rhea" id="RHEA:33963"/>
        <dbReference type="ChEBI" id="CHEBI:30616"/>
        <dbReference type="ChEBI" id="CHEBI:65078"/>
        <dbReference type="ChEBI" id="CHEBI:128769"/>
        <dbReference type="ChEBI" id="CHEBI:456216"/>
        <dbReference type="EC" id="2.7.4.26"/>
    </reaction>
</comment>
<comment type="biophysicochemical properties">
    <kinetics>
        <KM evidence="2 3">4.3 uM for isopentenyl phosphate</KM>
        <KM evidence="2 3">198 uM for ATP</KM>
    </kinetics>
    <phDependence>
        <text evidence="2 3">Optimum pH is 7-9.</text>
    </phDependence>
    <temperatureDependence>
        <text evidence="2 3">Retains 38% activity when incubated at 100 degrees Celsius for 10 minutes.</text>
    </temperatureDependence>
</comment>
<comment type="subunit">
    <text evidence="3">Homodimer.</text>
</comment>
<comment type="similarity">
    <text evidence="4">Belongs to the isopentenyl phosphate kinase family.</text>
</comment>
<evidence type="ECO:0000250" key="1"/>
<evidence type="ECO:0000269" key="2">
    <source>
    </source>
</evidence>
<evidence type="ECO:0000269" key="3">
    <source>
    </source>
</evidence>
<evidence type="ECO:0000305" key="4"/>
<evidence type="ECO:0007829" key="5">
    <source>
        <dbReference type="PDB" id="3K4O"/>
    </source>
</evidence>
<evidence type="ECO:0007829" key="6">
    <source>
        <dbReference type="PDB" id="3K4Y"/>
    </source>
</evidence>
<evidence type="ECO:0007829" key="7">
    <source>
        <dbReference type="PDB" id="3K56"/>
    </source>
</evidence>
<gene>
    <name type="ordered locus">MJ0044</name>
</gene>
<organism>
    <name type="scientific">Methanocaldococcus jannaschii (strain ATCC 43067 / DSM 2661 / JAL-1 / JCM 10045 / NBRC 100440)</name>
    <name type="common">Methanococcus jannaschii</name>
    <dbReference type="NCBI Taxonomy" id="243232"/>
    <lineage>
        <taxon>Archaea</taxon>
        <taxon>Methanobacteriati</taxon>
        <taxon>Methanobacteriota</taxon>
        <taxon>Methanomada group</taxon>
        <taxon>Methanococci</taxon>
        <taxon>Methanococcales</taxon>
        <taxon>Methanocaldococcaceae</taxon>
        <taxon>Methanocaldococcus</taxon>
    </lineage>
</organism>
<accession>Q60352</accession>
<feature type="chain" id="PRO_0000106666" description="Isopentenyl phosphate kinase">
    <location>
        <begin position="1"/>
        <end position="260"/>
    </location>
</feature>
<feature type="binding site" evidence="4">
    <location>
        <begin position="6"/>
        <end position="10"/>
    </location>
    <ligand>
        <name>ATP</name>
        <dbReference type="ChEBI" id="CHEBI:30616"/>
    </ligand>
</feature>
<feature type="binding site">
    <location>
        <position position="55"/>
    </location>
    <ligand>
        <name>substrate</name>
    </ligand>
</feature>
<feature type="binding site" evidence="1">
    <location>
        <position position="56"/>
    </location>
    <ligand>
        <name>ATP</name>
        <dbReference type="ChEBI" id="CHEBI:30616"/>
    </ligand>
</feature>
<feature type="binding site">
    <location>
        <position position="60"/>
    </location>
    <ligand>
        <name>substrate</name>
    </ligand>
</feature>
<feature type="binding site">
    <location>
        <position position="159"/>
    </location>
    <ligand>
        <name>substrate</name>
    </ligand>
</feature>
<feature type="binding site" evidence="1">
    <location>
        <position position="180"/>
    </location>
    <ligand>
        <name>ATP</name>
        <dbReference type="ChEBI" id="CHEBI:30616"/>
    </ligand>
</feature>
<feature type="binding site" evidence="1">
    <location>
        <position position="217"/>
    </location>
    <ligand>
        <name>ATP</name>
        <dbReference type="ChEBI" id="CHEBI:30616"/>
    </ligand>
</feature>
<feature type="binding site" evidence="4">
    <location>
        <position position="221"/>
    </location>
    <ligand>
        <name>ATP</name>
        <dbReference type="ChEBI" id="CHEBI:30616"/>
    </ligand>
</feature>
<feature type="site" description="Transition state stabilizer" evidence="1">
    <location>
        <position position="15"/>
    </location>
</feature>
<feature type="mutagenesis site" description="Abolishes enzyme activity." evidence="3">
    <original>H</original>
    <variation>A</variation>
    <variation>N</variation>
    <location>
        <position position="60"/>
    </location>
</feature>
<feature type="mutagenesis site" description="Nearly abolishes enzyme activity." evidence="3">
    <original>H</original>
    <variation>Q</variation>
    <location>
        <position position="60"/>
    </location>
</feature>
<feature type="mutagenesis site" description="Confers activity with farnesyl phosphate; when associated with A-86 and A-156. Confers low activity with farnesyl phosphate." evidence="3">
    <original>F</original>
    <variation>A</variation>
    <location>
        <position position="83"/>
    </location>
</feature>
<feature type="mutagenesis site" description="Confers activity with farnesyl phosphate; when associated with A-83 and A-156." evidence="3">
    <original>I</original>
    <variation>A</variation>
    <location>
        <position position="86"/>
    </location>
</feature>
<feature type="mutagenesis site" description="Confers low activity with farnesyl phosphate." evidence="3">
    <original>I</original>
    <variation>G</variation>
    <location>
        <position position="86"/>
    </location>
</feature>
<feature type="mutagenesis site" description="Confers activity with farnesyl phosphate; when associated with A-83 and A-86." evidence="3">
    <original>I</original>
    <variation>A</variation>
    <location>
        <position position="156"/>
    </location>
</feature>
<feature type="mutagenesis site" description="Confers low activity with farnesyl phosphate." evidence="3">
    <original>I</original>
    <variation>G</variation>
    <location>
        <position position="156"/>
    </location>
</feature>
<feature type="strand" evidence="5">
    <location>
        <begin position="2"/>
        <end position="7"/>
    </location>
</feature>
<feature type="helix" evidence="7">
    <location>
        <begin position="9"/>
        <end position="12"/>
    </location>
</feature>
<feature type="helix" evidence="5">
    <location>
        <begin position="23"/>
        <end position="42"/>
    </location>
</feature>
<feature type="strand" evidence="5">
    <location>
        <begin position="48"/>
        <end position="53"/>
    </location>
</feature>
<feature type="helix" evidence="5">
    <location>
        <begin position="56"/>
        <end position="63"/>
    </location>
</feature>
<feature type="helix" evidence="5">
    <location>
        <begin position="64"/>
        <end position="66"/>
    </location>
</feature>
<feature type="strand" evidence="5">
    <location>
        <begin position="67"/>
        <end position="69"/>
    </location>
</feature>
<feature type="strand" evidence="5">
    <location>
        <begin position="71"/>
        <end position="76"/>
    </location>
</feature>
<feature type="helix" evidence="5">
    <location>
        <begin position="79"/>
        <end position="102"/>
    </location>
</feature>
<feature type="turn" evidence="5">
    <location>
        <begin position="103"/>
        <end position="105"/>
    </location>
</feature>
<feature type="strand" evidence="5">
    <location>
        <begin position="108"/>
        <end position="111"/>
    </location>
</feature>
<feature type="helix" evidence="5">
    <location>
        <begin position="113"/>
        <end position="115"/>
    </location>
</feature>
<feature type="strand" evidence="5">
    <location>
        <begin position="118"/>
        <end position="122"/>
    </location>
</feature>
<feature type="helix" evidence="5">
    <location>
        <begin position="128"/>
        <end position="135"/>
    </location>
</feature>
<feature type="strand" evidence="5">
    <location>
        <begin position="139"/>
        <end position="143"/>
    </location>
</feature>
<feature type="strand" evidence="5">
    <location>
        <begin position="145"/>
        <end position="152"/>
    </location>
</feature>
<feature type="strand" evidence="5">
    <location>
        <begin position="154"/>
        <end position="157"/>
    </location>
</feature>
<feature type="helix" evidence="5">
    <location>
        <begin position="159"/>
        <end position="170"/>
    </location>
</feature>
<feature type="strand" evidence="5">
    <location>
        <begin position="173"/>
        <end position="190"/>
    </location>
</feature>
<feature type="strand" evidence="5">
    <location>
        <begin position="192"/>
        <end position="194"/>
    </location>
</feature>
<feature type="turn" evidence="5">
    <location>
        <begin position="196"/>
        <end position="198"/>
    </location>
</feature>
<feature type="helix" evidence="5">
    <location>
        <begin position="199"/>
        <end position="207"/>
    </location>
</feature>
<feature type="strand" evidence="6">
    <location>
        <begin position="208"/>
        <end position="210"/>
    </location>
</feature>
<feature type="helix" evidence="5">
    <location>
        <begin position="217"/>
        <end position="227"/>
    </location>
</feature>
<feature type="strand" evidence="5">
    <location>
        <begin position="231"/>
        <end position="236"/>
    </location>
</feature>
<feature type="helix" evidence="5">
    <location>
        <begin position="242"/>
        <end position="247"/>
    </location>
</feature>
<feature type="strand" evidence="5">
    <location>
        <begin position="253"/>
        <end position="257"/>
    </location>
</feature>